<organism>
    <name type="scientific">Mycobacterium tuberculosis (strain CDC 1551 / Oshkosh)</name>
    <dbReference type="NCBI Taxonomy" id="83331"/>
    <lineage>
        <taxon>Bacteria</taxon>
        <taxon>Bacillati</taxon>
        <taxon>Actinomycetota</taxon>
        <taxon>Actinomycetes</taxon>
        <taxon>Mycobacteriales</taxon>
        <taxon>Mycobacteriaceae</taxon>
        <taxon>Mycobacterium</taxon>
        <taxon>Mycobacterium tuberculosis complex</taxon>
    </lineage>
</organism>
<proteinExistence type="inferred from homology"/>
<accession>Q7D9A2</accession>
<evidence type="ECO:0000250" key="1"/>
<evidence type="ECO:0000305" key="2"/>
<sequence length="566" mass="61296">MALTCTDMSDAVAGSDAEGLTADAIVVGAGLAGLVAACELADRGLRVLILDQENRANVGGQAFWSFGGLFLVNSPEQRRLGIRDSHELALQDWLGTAAFDRPEDYWPEQWAHAYVDFAAGEKRSWLRARGLKIFPLVGWAERGGYDAQGHGNSVPRFHITWGTGPALVDIFVRQLRDRPTVRFAHRHQVDKLIVEGNAVTGVRGTVLEPSDEPRGAPSSRKSVGKFEFRASAVIVASGGIGGNHELVRKNWPRRMGRIPKQLLSGVPAHVDGRMIGIAQKAGAAVINPDRMWHYTEGITNYDPIWPRHGIRIIPGPSSLWLDAAGKRLPVPLFPGFDTLGTLEYITKSGHDYTWFVLNAKIIEKEFALSGQEQNPDLTGRRLGQLLRSRAHAGPPGPVQAFIDRGVDFVHANSLRELVAAMNELPDVVPLDYETVAAAVTARDREVVNKYSKDGQITAIRAARRYRGDRFGRVVAPHRLTDPKAGPLIAVKLHILTRKTLGGIETDLDARVLKADGTPLAGLYAAGEVAGFGGGGVHGYRALEGTFLGGCIFSGRAAGRGAAEDIR</sequence>
<gene>
    <name type="ordered locus">MT0809</name>
</gene>
<reference key="1">
    <citation type="journal article" date="2002" name="J. Bacteriol.">
        <title>Whole-genome comparison of Mycobacterium tuberculosis clinical and laboratory strains.</title>
        <authorList>
            <person name="Fleischmann R.D."/>
            <person name="Alland D."/>
            <person name="Eisen J.A."/>
            <person name="Carpenter L."/>
            <person name="White O."/>
            <person name="Peterson J.D."/>
            <person name="DeBoy R.T."/>
            <person name="Dodson R.J."/>
            <person name="Gwinn M.L."/>
            <person name="Haft D.H."/>
            <person name="Hickey E.K."/>
            <person name="Kolonay J.F."/>
            <person name="Nelson W.C."/>
            <person name="Umayam L.A."/>
            <person name="Ermolaeva M.D."/>
            <person name="Salzberg S.L."/>
            <person name="Delcher A."/>
            <person name="Utterback T.R."/>
            <person name="Weidman J.F."/>
            <person name="Khouri H.M."/>
            <person name="Gill J."/>
            <person name="Mikula A."/>
            <person name="Bishai W."/>
            <person name="Jacobs W.R. Jr."/>
            <person name="Venter J.C."/>
            <person name="Fraser C.M."/>
        </authorList>
    </citation>
    <scope>NUCLEOTIDE SEQUENCE [LARGE SCALE GENOMIC DNA]</scope>
    <source>
        <strain>CDC 1551 / Oshkosh</strain>
    </source>
</reference>
<feature type="chain" id="PRO_0000403956" description="KsdD-like steroid dehydrogenase MT0809">
    <location>
        <begin position="1"/>
        <end position="566"/>
    </location>
</feature>
<feature type="binding site" evidence="1">
    <location>
        <begin position="23"/>
        <end position="54"/>
    </location>
    <ligand>
        <name>FAD</name>
        <dbReference type="ChEBI" id="CHEBI:57692"/>
    </ligand>
</feature>
<name>Y0809_MYCTO</name>
<dbReference type="EC" id="1.3.99.-"/>
<dbReference type="EMBL" id="AE000516">
    <property type="protein sequence ID" value="AAK45051.1"/>
    <property type="molecule type" value="Genomic_DNA"/>
</dbReference>
<dbReference type="SMR" id="Q7D9A2"/>
<dbReference type="KEGG" id="mtc:MT0809"/>
<dbReference type="PATRIC" id="fig|83331.31.peg.869"/>
<dbReference type="HOGENOM" id="CLU_022946_0_0_11"/>
<dbReference type="UniPathway" id="UPA00062"/>
<dbReference type="Proteomes" id="UP000001020">
    <property type="component" value="Chromosome"/>
</dbReference>
<dbReference type="GO" id="GO:0033765">
    <property type="term" value="F:steroid dehydrogenase activity, acting on the CH-CH group of donors"/>
    <property type="evidence" value="ECO:0007669"/>
    <property type="project" value="UniProtKB-ARBA"/>
</dbReference>
<dbReference type="GO" id="GO:0016042">
    <property type="term" value="P:lipid catabolic process"/>
    <property type="evidence" value="ECO:0007669"/>
    <property type="project" value="UniProtKB-KW"/>
</dbReference>
<dbReference type="GO" id="GO:0006694">
    <property type="term" value="P:steroid biosynthetic process"/>
    <property type="evidence" value="ECO:0007669"/>
    <property type="project" value="UniProtKB-UniPathway"/>
</dbReference>
<dbReference type="FunFam" id="3.90.700.10:FF:000011">
    <property type="entry name" value="Putative FAD-binding dehydrogenase"/>
    <property type="match status" value="1"/>
</dbReference>
<dbReference type="Gene3D" id="3.50.50.60">
    <property type="entry name" value="FAD/NAD(P)-binding domain"/>
    <property type="match status" value="1"/>
</dbReference>
<dbReference type="Gene3D" id="3.90.700.10">
    <property type="entry name" value="Succinate dehydrogenase/fumarate reductase flavoprotein, catalytic domain"/>
    <property type="match status" value="1"/>
</dbReference>
<dbReference type="InterPro" id="IPR003953">
    <property type="entry name" value="FAD-dep_OxRdtase_2_FAD-bd"/>
</dbReference>
<dbReference type="InterPro" id="IPR036188">
    <property type="entry name" value="FAD/NAD-bd_sf"/>
</dbReference>
<dbReference type="InterPro" id="IPR014614">
    <property type="entry name" value="KsdD_DH"/>
</dbReference>
<dbReference type="InterPro" id="IPR027477">
    <property type="entry name" value="Succ_DH/fumarate_Rdtase_cat_sf"/>
</dbReference>
<dbReference type="NCBIfam" id="NF009472">
    <property type="entry name" value="PRK12834.1"/>
    <property type="match status" value="1"/>
</dbReference>
<dbReference type="PANTHER" id="PTHR43260">
    <property type="entry name" value="3-KETOSTEROID-DELTA-1-DEHYDROGENASE"/>
    <property type="match status" value="1"/>
</dbReference>
<dbReference type="PANTHER" id="PTHR43260:SF1">
    <property type="entry name" value="KSDD-LIKE STEROID DEHYDROGENASE RV0785"/>
    <property type="match status" value="1"/>
</dbReference>
<dbReference type="Pfam" id="PF00890">
    <property type="entry name" value="FAD_binding_2"/>
    <property type="match status" value="1"/>
</dbReference>
<dbReference type="PIRSF" id="PIRSF036654">
    <property type="entry name" value="UCP036654"/>
    <property type="match status" value="1"/>
</dbReference>
<dbReference type="SUPFAM" id="SSF51905">
    <property type="entry name" value="FAD/NAD(P)-binding domain"/>
    <property type="match status" value="1"/>
</dbReference>
<keyword id="KW-0274">FAD</keyword>
<keyword id="KW-0285">Flavoprotein</keyword>
<keyword id="KW-0442">Lipid degradation</keyword>
<keyword id="KW-0443">Lipid metabolism</keyword>
<keyword id="KW-0560">Oxidoreductase</keyword>
<keyword id="KW-1185">Reference proteome</keyword>
<keyword id="KW-0753">Steroid metabolism</keyword>
<comment type="function">
    <text evidence="1">Able to catalyze the elimination of the C-1 and C-2 hydrogen atoms of the A-ring from the polycyclic ring structure of 3-ketosteroids.</text>
</comment>
<comment type="cofactor">
    <cofactor evidence="1">
        <name>FAD</name>
        <dbReference type="ChEBI" id="CHEBI:57692"/>
    </cofactor>
</comment>
<comment type="pathway">
    <text>Lipid metabolism; steroid biosynthesis.</text>
</comment>
<comment type="similarity">
    <text evidence="2">Belongs to the FAD-dependent oxidoreductase 2 family.</text>
</comment>
<protein>
    <recommendedName>
        <fullName>KsdD-like steroid dehydrogenase MT0809</fullName>
        <ecNumber>1.3.99.-</ecNumber>
    </recommendedName>
</protein>